<organism>
    <name type="scientific">Staphylococcus aureus (strain COL)</name>
    <dbReference type="NCBI Taxonomy" id="93062"/>
    <lineage>
        <taxon>Bacteria</taxon>
        <taxon>Bacillati</taxon>
        <taxon>Bacillota</taxon>
        <taxon>Bacilli</taxon>
        <taxon>Bacillales</taxon>
        <taxon>Staphylococcaceae</taxon>
        <taxon>Staphylococcus</taxon>
    </lineage>
</organism>
<proteinExistence type="evidence at protein level"/>
<accession>Q5HE87</accession>
<name>GLYA_STAAC</name>
<dbReference type="EC" id="2.1.2.1" evidence="1"/>
<dbReference type="EMBL" id="CP000046">
    <property type="protein sequence ID" value="AAW38415.1"/>
    <property type="molecule type" value="Genomic_DNA"/>
</dbReference>
<dbReference type="RefSeq" id="WP_000120494.1">
    <property type="nucleotide sequence ID" value="NZ_JBGOFO010000007.1"/>
</dbReference>
<dbReference type="PDB" id="3PGY">
    <property type="method" value="X-ray"/>
    <property type="resolution" value="1.92 A"/>
    <property type="chains" value="A/B/C/D=1-412"/>
</dbReference>
<dbReference type="PDBsum" id="3PGY"/>
<dbReference type="SMR" id="Q5HE87"/>
<dbReference type="KEGG" id="sac:SACOL2105"/>
<dbReference type="HOGENOM" id="CLU_022477_2_1_9"/>
<dbReference type="BRENDA" id="2.1.2.1">
    <property type="organism ID" value="3352"/>
</dbReference>
<dbReference type="UniPathway" id="UPA00193"/>
<dbReference type="UniPathway" id="UPA00288">
    <property type="reaction ID" value="UER01023"/>
</dbReference>
<dbReference type="EvolutionaryTrace" id="Q5HE87"/>
<dbReference type="Proteomes" id="UP000000530">
    <property type="component" value="Chromosome"/>
</dbReference>
<dbReference type="GO" id="GO:0005829">
    <property type="term" value="C:cytosol"/>
    <property type="evidence" value="ECO:0007669"/>
    <property type="project" value="TreeGrafter"/>
</dbReference>
<dbReference type="GO" id="GO:0004372">
    <property type="term" value="F:glycine hydroxymethyltransferase activity"/>
    <property type="evidence" value="ECO:0007669"/>
    <property type="project" value="UniProtKB-UniRule"/>
</dbReference>
<dbReference type="GO" id="GO:0030170">
    <property type="term" value="F:pyridoxal phosphate binding"/>
    <property type="evidence" value="ECO:0007669"/>
    <property type="project" value="UniProtKB-UniRule"/>
</dbReference>
<dbReference type="GO" id="GO:0019264">
    <property type="term" value="P:glycine biosynthetic process from serine"/>
    <property type="evidence" value="ECO:0007669"/>
    <property type="project" value="UniProtKB-UniRule"/>
</dbReference>
<dbReference type="GO" id="GO:0035999">
    <property type="term" value="P:tetrahydrofolate interconversion"/>
    <property type="evidence" value="ECO:0007669"/>
    <property type="project" value="UniProtKB-UniRule"/>
</dbReference>
<dbReference type="CDD" id="cd00378">
    <property type="entry name" value="SHMT"/>
    <property type="match status" value="1"/>
</dbReference>
<dbReference type="FunFam" id="3.40.640.10:FF:000001">
    <property type="entry name" value="Serine hydroxymethyltransferase"/>
    <property type="match status" value="1"/>
</dbReference>
<dbReference type="FunFam" id="3.90.1150.10:FF:000003">
    <property type="entry name" value="Serine hydroxymethyltransferase"/>
    <property type="match status" value="1"/>
</dbReference>
<dbReference type="Gene3D" id="3.90.1150.10">
    <property type="entry name" value="Aspartate Aminotransferase, domain 1"/>
    <property type="match status" value="1"/>
</dbReference>
<dbReference type="Gene3D" id="3.40.640.10">
    <property type="entry name" value="Type I PLP-dependent aspartate aminotransferase-like (Major domain)"/>
    <property type="match status" value="1"/>
</dbReference>
<dbReference type="HAMAP" id="MF_00051">
    <property type="entry name" value="SHMT"/>
    <property type="match status" value="1"/>
</dbReference>
<dbReference type="InterPro" id="IPR015424">
    <property type="entry name" value="PyrdxlP-dep_Trfase"/>
</dbReference>
<dbReference type="InterPro" id="IPR015421">
    <property type="entry name" value="PyrdxlP-dep_Trfase_major"/>
</dbReference>
<dbReference type="InterPro" id="IPR015422">
    <property type="entry name" value="PyrdxlP-dep_Trfase_small"/>
</dbReference>
<dbReference type="InterPro" id="IPR001085">
    <property type="entry name" value="Ser_HO-MeTrfase"/>
</dbReference>
<dbReference type="InterPro" id="IPR049943">
    <property type="entry name" value="Ser_HO-MeTrfase-like"/>
</dbReference>
<dbReference type="InterPro" id="IPR019798">
    <property type="entry name" value="Ser_HO-MeTrfase_PLP_BS"/>
</dbReference>
<dbReference type="InterPro" id="IPR039429">
    <property type="entry name" value="SHMT-like_dom"/>
</dbReference>
<dbReference type="NCBIfam" id="NF000586">
    <property type="entry name" value="PRK00011.1"/>
    <property type="match status" value="1"/>
</dbReference>
<dbReference type="PANTHER" id="PTHR11680">
    <property type="entry name" value="SERINE HYDROXYMETHYLTRANSFERASE"/>
    <property type="match status" value="1"/>
</dbReference>
<dbReference type="PANTHER" id="PTHR11680:SF35">
    <property type="entry name" value="SERINE HYDROXYMETHYLTRANSFERASE 1"/>
    <property type="match status" value="1"/>
</dbReference>
<dbReference type="Pfam" id="PF00464">
    <property type="entry name" value="SHMT"/>
    <property type="match status" value="1"/>
</dbReference>
<dbReference type="PIRSF" id="PIRSF000412">
    <property type="entry name" value="SHMT"/>
    <property type="match status" value="1"/>
</dbReference>
<dbReference type="SUPFAM" id="SSF53383">
    <property type="entry name" value="PLP-dependent transferases"/>
    <property type="match status" value="1"/>
</dbReference>
<dbReference type="PROSITE" id="PS00096">
    <property type="entry name" value="SHMT"/>
    <property type="match status" value="1"/>
</dbReference>
<gene>
    <name evidence="1" type="primary">glyA</name>
    <name type="ordered locus">SACOL2105</name>
</gene>
<keyword id="KW-0002">3D-structure</keyword>
<keyword id="KW-0028">Amino-acid biosynthesis</keyword>
<keyword id="KW-0963">Cytoplasm</keyword>
<keyword id="KW-0554">One-carbon metabolism</keyword>
<keyword id="KW-0663">Pyridoxal phosphate</keyword>
<keyword id="KW-0808">Transferase</keyword>
<comment type="function">
    <text evidence="1">Catalyzes the reversible interconversion of serine and glycine with tetrahydrofolate (THF) serving as the one-carbon carrier. This reaction serves as the major source of one-carbon groups required for the biosynthesis of purines, thymidylate, methionine, and other important biomolecules. Also exhibits THF-independent aldolase activity toward beta-hydroxyamino acids, producing glycine and aldehydes, via a retro-aldol mechanism.</text>
</comment>
<comment type="catalytic activity">
    <reaction evidence="1">
        <text>(6R)-5,10-methylene-5,6,7,8-tetrahydrofolate + glycine + H2O = (6S)-5,6,7,8-tetrahydrofolate + L-serine</text>
        <dbReference type="Rhea" id="RHEA:15481"/>
        <dbReference type="ChEBI" id="CHEBI:15377"/>
        <dbReference type="ChEBI" id="CHEBI:15636"/>
        <dbReference type="ChEBI" id="CHEBI:33384"/>
        <dbReference type="ChEBI" id="CHEBI:57305"/>
        <dbReference type="ChEBI" id="CHEBI:57453"/>
        <dbReference type="EC" id="2.1.2.1"/>
    </reaction>
</comment>
<comment type="cofactor">
    <cofactor evidence="1">
        <name>pyridoxal 5'-phosphate</name>
        <dbReference type="ChEBI" id="CHEBI:597326"/>
    </cofactor>
</comment>
<comment type="pathway">
    <text evidence="1">One-carbon metabolism; tetrahydrofolate interconversion.</text>
</comment>
<comment type="pathway">
    <text evidence="1">Amino-acid biosynthesis; glycine biosynthesis; glycine from L-serine: step 1/1.</text>
</comment>
<comment type="subunit">
    <text evidence="1 2">Homodimer.</text>
</comment>
<comment type="subcellular location">
    <subcellularLocation>
        <location evidence="1">Cytoplasm</location>
    </subcellularLocation>
</comment>
<comment type="similarity">
    <text evidence="1 3">Belongs to the SHMT family.</text>
</comment>
<reference key="1">
    <citation type="journal article" date="2005" name="J. Bacteriol.">
        <title>Insights on evolution of virulence and resistance from the complete genome analysis of an early methicillin-resistant Staphylococcus aureus strain and a biofilm-producing methicillin-resistant Staphylococcus epidermidis strain.</title>
        <authorList>
            <person name="Gill S.R."/>
            <person name="Fouts D.E."/>
            <person name="Archer G.L."/>
            <person name="Mongodin E.F."/>
            <person name="DeBoy R.T."/>
            <person name="Ravel J."/>
            <person name="Paulsen I.T."/>
            <person name="Kolonay J.F."/>
            <person name="Brinkac L.M."/>
            <person name="Beanan M.J."/>
            <person name="Dodson R.J."/>
            <person name="Daugherty S.C."/>
            <person name="Madupu R."/>
            <person name="Angiuoli S.V."/>
            <person name="Durkin A.S."/>
            <person name="Haft D.H."/>
            <person name="Vamathevan J.J."/>
            <person name="Khouri H."/>
            <person name="Utterback T.R."/>
            <person name="Lee C."/>
            <person name="Dimitrov G."/>
            <person name="Jiang L."/>
            <person name="Qin H."/>
            <person name="Weidman J."/>
            <person name="Tran K."/>
            <person name="Kang K.H."/>
            <person name="Hance I.R."/>
            <person name="Nelson K.E."/>
            <person name="Fraser C.M."/>
        </authorList>
    </citation>
    <scope>NUCLEOTIDE SEQUENCE [LARGE SCALE GENOMIC DNA]</scope>
    <source>
        <strain>COL</strain>
    </source>
</reference>
<reference key="2">
    <citation type="submission" date="2010-11" db="PDB data bank">
        <title>Serine hydroxymethyltransferase from Staphylococcus aureus S95P mutant.</title>
        <authorList>
            <consortium name="Center for structural genomics of infectious diseases (CSGID)"/>
            <person name="Osipiuk J."/>
            <person name="Makowska-Grzyska M."/>
            <person name="Kwon K."/>
            <person name="Anderson W.F."/>
            <person name="Joachimiak A."/>
        </authorList>
    </citation>
    <scope>X-RAY CRYSTALLOGRAPHY (1.92 ANGSTROMS) IN COMPLEX WITH SUBSTRATE ANALOGS</scope>
    <scope>SUBUNIT</scope>
</reference>
<sequence length="412" mass="45172">MSYITKQDKVIAEAIEREFQRQNSNIELIASENFVSEAVMEAQGSVLTNKYAEGYPGRRYYGGCEFVDVTESIAIDRAKALFGAEHVNVQPHSGSQANMAVYLVALEMGDTVLGMNLSHGGHLTHGAPVNFSGKFYNFVEYGVDKDTERINYDEVRKLALEHKPKLIVAGASAYSRTIDFKKFKEIADEVNAKLMVDMAHIAGLVAAGLHPNPVEYADFVTTTTHKTLRGPRGGMILCKEEYKKDIDKTIFPGIQGGPLEHVIAAKAVAFGEALENNFKTYQQQVVKNAKVLAEALINEGFRIVSGGTDNHLVAVDVKGSIGLTGKEAEETLDSVGITCNKNTIPFDQEKPFVTSGIRLGTPAATTRGFDEKAFEEVAKIISLALKNSKDEEKLQQAKERVAKLTAEYPLYQ</sequence>
<evidence type="ECO:0000255" key="1">
    <source>
        <dbReference type="HAMAP-Rule" id="MF_00051"/>
    </source>
</evidence>
<evidence type="ECO:0000269" key="2">
    <source ref="2"/>
</evidence>
<evidence type="ECO:0000305" key="3"/>
<evidence type="ECO:0007829" key="4">
    <source>
        <dbReference type="PDB" id="3PGY"/>
    </source>
</evidence>
<protein>
    <recommendedName>
        <fullName evidence="1">Serine hydroxymethyltransferase</fullName>
        <shortName evidence="1">SHMT</shortName>
        <shortName evidence="1">Serine methylase</shortName>
        <ecNumber evidence="1">2.1.2.1</ecNumber>
    </recommendedName>
</protein>
<feature type="chain" id="PRO_0000113661" description="Serine hydroxymethyltransferase">
    <location>
        <begin position="1"/>
        <end position="412"/>
    </location>
</feature>
<feature type="binding site" evidence="1">
    <location>
        <position position="117"/>
    </location>
    <ligand>
        <name>(6S)-5,6,7,8-tetrahydrofolate</name>
        <dbReference type="ChEBI" id="CHEBI:57453"/>
    </ligand>
</feature>
<feature type="binding site" evidence="1">
    <location>
        <begin position="121"/>
        <end position="123"/>
    </location>
    <ligand>
        <name>(6S)-5,6,7,8-tetrahydrofolate</name>
        <dbReference type="ChEBI" id="CHEBI:57453"/>
    </ligand>
</feature>
<feature type="site" description="Plays an important role in substrate specificity" evidence="1">
    <location>
        <position position="225"/>
    </location>
</feature>
<feature type="modified residue" description="N6-(pyridoxal phosphate)lysine" evidence="1">
    <location>
        <position position="226"/>
    </location>
</feature>
<feature type="helix" evidence="4">
    <location>
        <begin position="2"/>
        <end position="7"/>
    </location>
</feature>
<feature type="helix" evidence="4">
    <location>
        <begin position="9"/>
        <end position="24"/>
    </location>
</feature>
<feature type="strand" evidence="4">
    <location>
        <begin position="25"/>
        <end position="27"/>
    </location>
</feature>
<feature type="helix" evidence="4">
    <location>
        <begin position="37"/>
        <end position="43"/>
    </location>
</feature>
<feature type="helix" evidence="4">
    <location>
        <begin position="46"/>
        <end position="49"/>
    </location>
</feature>
<feature type="helix" evidence="4">
    <location>
        <begin position="65"/>
        <end position="82"/>
    </location>
</feature>
<feature type="strand" evidence="4">
    <location>
        <begin position="85"/>
        <end position="88"/>
    </location>
</feature>
<feature type="helix" evidence="4">
    <location>
        <begin position="94"/>
        <end position="105"/>
    </location>
</feature>
<feature type="strand" evidence="4">
    <location>
        <begin position="111"/>
        <end position="115"/>
    </location>
</feature>
<feature type="helix" evidence="4">
    <location>
        <begin position="131"/>
        <end position="134"/>
    </location>
</feature>
<feature type="strand" evidence="4">
    <location>
        <begin position="135"/>
        <end position="140"/>
    </location>
</feature>
<feature type="turn" evidence="4">
    <location>
        <begin position="145"/>
        <end position="147"/>
    </location>
</feature>
<feature type="helix" evidence="4">
    <location>
        <begin position="152"/>
        <end position="162"/>
    </location>
</feature>
<feature type="strand" evidence="4">
    <location>
        <begin position="165"/>
        <end position="170"/>
    </location>
</feature>
<feature type="helix" evidence="4">
    <location>
        <begin position="180"/>
        <end position="190"/>
    </location>
</feature>
<feature type="strand" evidence="4">
    <location>
        <begin position="193"/>
        <end position="197"/>
    </location>
</feature>
<feature type="turn" evidence="4">
    <location>
        <begin position="199"/>
        <end position="201"/>
    </location>
</feature>
<feature type="helix" evidence="4">
    <location>
        <begin position="202"/>
        <end position="206"/>
    </location>
</feature>
<feature type="helix" evidence="4">
    <location>
        <begin position="213"/>
        <end position="215"/>
    </location>
</feature>
<feature type="strand" evidence="4">
    <location>
        <begin position="218"/>
        <end position="226"/>
    </location>
</feature>
<feature type="strand" evidence="4">
    <location>
        <begin position="234"/>
        <end position="238"/>
    </location>
</feature>
<feature type="helix" evidence="4">
    <location>
        <begin position="240"/>
        <end position="242"/>
    </location>
</feature>
<feature type="helix" evidence="4">
    <location>
        <begin position="243"/>
        <end position="250"/>
    </location>
</feature>
<feature type="turn" evidence="4">
    <location>
        <begin position="251"/>
        <end position="254"/>
    </location>
</feature>
<feature type="helix" evidence="4">
    <location>
        <begin position="260"/>
        <end position="274"/>
    </location>
</feature>
<feature type="helix" evidence="4">
    <location>
        <begin position="276"/>
        <end position="298"/>
    </location>
</feature>
<feature type="helix" evidence="4">
    <location>
        <begin position="304"/>
        <end position="306"/>
    </location>
</feature>
<feature type="strand" evidence="4">
    <location>
        <begin position="309"/>
        <end position="316"/>
    </location>
</feature>
<feature type="helix" evidence="4">
    <location>
        <begin position="317"/>
        <end position="321"/>
    </location>
</feature>
<feature type="helix" evidence="4">
    <location>
        <begin position="325"/>
        <end position="334"/>
    </location>
</feature>
<feature type="strand" evidence="4">
    <location>
        <begin position="340"/>
        <end position="342"/>
    </location>
</feature>
<feature type="turn" evidence="4">
    <location>
        <begin position="351"/>
        <end position="353"/>
    </location>
</feature>
<feature type="strand" evidence="4">
    <location>
        <begin position="355"/>
        <end position="360"/>
    </location>
</feature>
<feature type="helix" evidence="4">
    <location>
        <begin position="362"/>
        <end position="366"/>
    </location>
</feature>
<feature type="helix" evidence="4">
    <location>
        <begin position="371"/>
        <end position="386"/>
    </location>
</feature>
<feature type="turn" evidence="4">
    <location>
        <begin position="387"/>
        <end position="389"/>
    </location>
</feature>
<feature type="helix" evidence="4">
    <location>
        <begin position="391"/>
        <end position="407"/>
    </location>
</feature>